<protein>
    <recommendedName>
        <fullName>Cuticle collagen dpy-13</fullName>
    </recommendedName>
    <alternativeName>
        <fullName>Protein dumpy-13</fullName>
    </alternativeName>
</protein>
<name>DPY13_CAEEL</name>
<sequence length="302" mass="30053">MDIDTKIKAYRFVAYSAVVFSVIAVLSVCITLPIVYNYVHTVRRQLHNEALTCKGSMKDVWADVHHLRVDAASNRTARAVRYGRDDAAAGNGPNFDSGCEGCCQPGPQGAPGAPGKPGRPGKPGAPGFPGNPGKAPQKPCEEITPPPCKPCPQGPPGAPGLPGDQGDKGEAGQPGQPGSDAAPGEQGPKGPNGAPGKPGAPGAPGDEGLPAVCEPVQKGEPGSTGEPGPVGPPGPSGQPGNDGTPGQPGPKGPPGPDGKPGADGNPGQPGPVGPPGTPGERGICPKYCAIDGGIFFEDGTRR</sequence>
<accession>P17657</accession>
<keyword id="KW-0176">Collagen</keyword>
<keyword id="KW-0193">Cuticle</keyword>
<keyword id="KW-1015">Disulfide bond</keyword>
<keyword id="KW-1185">Reference proteome</keyword>
<keyword id="KW-0677">Repeat</keyword>
<comment type="function">
    <text>Nematode cuticles are composed largely of collagen-like proteins. The cuticle functions both as an exoskeleton and as a barrier to protect the worm from its environment. Mutations in dpy-13 affects the body shape.</text>
</comment>
<comment type="subunit">
    <text>Collagen polypeptide chains are complexed within the cuticle by disulfide bonds and other types of covalent cross-links.</text>
</comment>
<comment type="similarity">
    <text evidence="3">Belongs to the cuticular collagen family.</text>
</comment>
<reference key="1">
    <citation type="journal article" date="1988" name="Cell">
        <title>dpy-13: a nematode collagen gene that affects body shape.</title>
        <authorList>
            <person name="von Mende N."/>
            <person name="Bird D.M."/>
            <person name="Albert P.S."/>
            <person name="Riddle D.L."/>
        </authorList>
    </citation>
    <scope>NUCLEOTIDE SEQUENCE [GENOMIC DNA]</scope>
</reference>
<reference key="2">
    <citation type="journal article" date="1998" name="Science">
        <title>Genome sequence of the nematode C. elegans: a platform for investigating biology.</title>
        <authorList>
            <consortium name="The C. elegans sequencing consortium"/>
        </authorList>
    </citation>
    <scope>NUCLEOTIDE SEQUENCE [LARGE SCALE GENOMIC DNA]</scope>
    <source>
        <strain>Bristol N2</strain>
    </source>
</reference>
<reference key="3">
    <citation type="journal article" date="1992" name="Gene">
        <title>Sequence comparison of the Caenorhabditis elegans dpy-13 and col-34 genes, and their deduced collagen products.</title>
        <authorList>
            <person name="Bird D.M."/>
        </authorList>
    </citation>
    <scope>MUTAGENESIS OF GLY-205</scope>
</reference>
<dbReference type="EMBL" id="M23559">
    <property type="protein sequence ID" value="AAA27994.1"/>
    <property type="molecule type" value="Genomic_DNA"/>
</dbReference>
<dbReference type="EMBL" id="FO081259">
    <property type="protein sequence ID" value="CCD70270.1"/>
    <property type="molecule type" value="Genomic_DNA"/>
</dbReference>
<dbReference type="PIR" id="A31921">
    <property type="entry name" value="A31921"/>
</dbReference>
<dbReference type="RefSeq" id="NP_500519.1">
    <property type="nucleotide sequence ID" value="NM_068118.6"/>
</dbReference>
<dbReference type="SMR" id="P17657"/>
<dbReference type="FunCoup" id="P17657">
    <property type="interactions" value="27"/>
</dbReference>
<dbReference type="STRING" id="6239.F30B5.1.1"/>
<dbReference type="PaxDb" id="6239-F30B5.1"/>
<dbReference type="PeptideAtlas" id="P17657"/>
<dbReference type="EnsemblMetazoa" id="F30B5.1.1">
    <property type="protein sequence ID" value="F30B5.1.1"/>
    <property type="gene ID" value="WBGene00001074"/>
</dbReference>
<dbReference type="GeneID" id="177187"/>
<dbReference type="KEGG" id="cel:CELE_F30B5.1"/>
<dbReference type="UCSC" id="F30B5.1">
    <property type="organism name" value="c. elegans"/>
</dbReference>
<dbReference type="AGR" id="WB:WBGene00001074"/>
<dbReference type="CTD" id="177187"/>
<dbReference type="WormBase" id="F30B5.1">
    <property type="protein sequence ID" value="CE04462"/>
    <property type="gene ID" value="WBGene00001074"/>
    <property type="gene designation" value="dpy-13"/>
</dbReference>
<dbReference type="eggNOG" id="KOG3544">
    <property type="taxonomic scope" value="Eukaryota"/>
</dbReference>
<dbReference type="HOGENOM" id="CLU_001074_4_2_1"/>
<dbReference type="InParanoid" id="P17657"/>
<dbReference type="OMA" id="CEGCCQP"/>
<dbReference type="OrthoDB" id="5920520at2759"/>
<dbReference type="PhylomeDB" id="P17657"/>
<dbReference type="PRO" id="PR:P17657"/>
<dbReference type="Proteomes" id="UP000001940">
    <property type="component" value="Chromosome IV"/>
</dbReference>
<dbReference type="Bgee" id="WBGene00001074">
    <property type="expression patterns" value="Expressed in material anatomical entity and 4 other cell types or tissues"/>
</dbReference>
<dbReference type="GO" id="GO:0005581">
    <property type="term" value="C:collagen trimer"/>
    <property type="evidence" value="ECO:0007669"/>
    <property type="project" value="UniProtKB-KW"/>
</dbReference>
<dbReference type="GO" id="GO:0060102">
    <property type="term" value="C:cuticular extracellular matrix"/>
    <property type="evidence" value="ECO:0000314"/>
    <property type="project" value="WormBase"/>
</dbReference>
<dbReference type="GO" id="GO:0042302">
    <property type="term" value="F:structural constituent of cuticle"/>
    <property type="evidence" value="ECO:0007669"/>
    <property type="project" value="UniProtKB-KW"/>
</dbReference>
<dbReference type="GO" id="GO:0042338">
    <property type="term" value="P:cuticle development involved in collagen and cuticulin-based cuticle molting cycle"/>
    <property type="evidence" value="ECO:0000315"/>
    <property type="project" value="WormBase"/>
</dbReference>
<dbReference type="InterPro" id="IPR002486">
    <property type="entry name" value="Col_cuticle_N"/>
</dbReference>
<dbReference type="InterPro" id="IPR008160">
    <property type="entry name" value="Collagen"/>
</dbReference>
<dbReference type="PANTHER" id="PTHR24637">
    <property type="entry name" value="COLLAGEN"/>
    <property type="match status" value="1"/>
</dbReference>
<dbReference type="PANTHER" id="PTHR24637:SF317">
    <property type="entry name" value="CUTICLE COLLAGEN DPY-13"/>
    <property type="match status" value="1"/>
</dbReference>
<dbReference type="Pfam" id="PF01484">
    <property type="entry name" value="Col_cuticle_N"/>
    <property type="match status" value="1"/>
</dbReference>
<dbReference type="Pfam" id="PF01391">
    <property type="entry name" value="Collagen"/>
    <property type="match status" value="2"/>
</dbReference>
<dbReference type="SMART" id="SM01088">
    <property type="entry name" value="Col_cuticle_N"/>
    <property type="match status" value="1"/>
</dbReference>
<gene>
    <name type="primary">dpy-13</name>
    <name type="synonym">dpy-16</name>
    <name type="ORF">F30B5.1</name>
</gene>
<proteinExistence type="evidence at protein level"/>
<evidence type="ECO:0000256" key="1">
    <source>
        <dbReference type="SAM" id="MobiDB-lite"/>
    </source>
</evidence>
<evidence type="ECO:0000269" key="2">
    <source>
    </source>
</evidence>
<evidence type="ECO:0000305" key="3"/>
<feature type="chain" id="PRO_0000127598" description="Cuticle collagen dpy-13">
    <location>
        <begin position="1"/>
        <end position="302"/>
    </location>
</feature>
<feature type="region of interest" description="Triple-helical region">
    <location>
        <begin position="106"/>
        <end position="135"/>
    </location>
</feature>
<feature type="region of interest" description="Disordered" evidence="1">
    <location>
        <begin position="108"/>
        <end position="284"/>
    </location>
</feature>
<feature type="region of interest" description="Triple-helical region">
    <location>
        <begin position="154"/>
        <end position="210"/>
    </location>
</feature>
<feature type="region of interest" description="Triple-helical region">
    <location>
        <begin position="219"/>
        <end position="278"/>
    </location>
</feature>
<feature type="compositionally biased region" description="Pro residues" evidence="1">
    <location>
        <begin position="144"/>
        <end position="159"/>
    </location>
</feature>
<feature type="compositionally biased region" description="Low complexity" evidence="1">
    <location>
        <begin position="188"/>
        <end position="197"/>
    </location>
</feature>
<feature type="compositionally biased region" description="Pro residues" evidence="1">
    <location>
        <begin position="247"/>
        <end position="257"/>
    </location>
</feature>
<feature type="compositionally biased region" description="Pro residues" evidence="1">
    <location>
        <begin position="268"/>
        <end position="277"/>
    </location>
</feature>
<feature type="mutagenesis site" description="In dpy13(E225)." evidence="2">
    <original>G</original>
    <variation>E</variation>
    <location>
        <position position="205"/>
    </location>
</feature>
<organism>
    <name type="scientific">Caenorhabditis elegans</name>
    <dbReference type="NCBI Taxonomy" id="6239"/>
    <lineage>
        <taxon>Eukaryota</taxon>
        <taxon>Metazoa</taxon>
        <taxon>Ecdysozoa</taxon>
        <taxon>Nematoda</taxon>
        <taxon>Chromadorea</taxon>
        <taxon>Rhabditida</taxon>
        <taxon>Rhabditina</taxon>
        <taxon>Rhabditomorpha</taxon>
        <taxon>Rhabditoidea</taxon>
        <taxon>Rhabditidae</taxon>
        <taxon>Peloderinae</taxon>
        <taxon>Caenorhabditis</taxon>
    </lineage>
</organism>